<protein>
    <recommendedName>
        <fullName evidence="7">Lycopene elongase/hydratase</fullName>
        <ecNumber evidence="1">2.5.1.150</ecNumber>
    </recommendedName>
</protein>
<name>LYEL_HALVD</name>
<evidence type="ECO:0000250" key="1">
    <source>
        <dbReference type="UniProtKB" id="M0L7V9"/>
    </source>
</evidence>
<evidence type="ECO:0000250" key="2">
    <source>
        <dbReference type="UniProtKB" id="Q9HPD9"/>
    </source>
</evidence>
<evidence type="ECO:0000255" key="3"/>
<evidence type="ECO:0000256" key="4">
    <source>
        <dbReference type="SAM" id="MobiDB-lite"/>
    </source>
</evidence>
<evidence type="ECO:0000269" key="5">
    <source>
    </source>
</evidence>
<evidence type="ECO:0000303" key="6">
    <source>
    </source>
</evidence>
<evidence type="ECO:0000305" key="7"/>
<evidence type="ECO:0000305" key="8">
    <source>
    </source>
</evidence>
<accession>D4GTV9</accession>
<comment type="function">
    <text evidence="1 2 5">Involved in the biosynthesis of the acyclic C50 carotenoid bacterioruberin (BR) (PubMed:21840984). Acts as a bifunctional elongase/hydratase that catalyzes the elongation of lycopene by attaching a C(5) isoprene unit at C-2, as well as the hydroxylation of the previous end of the molecule (By similarity). The enzyme acts at both ends of the substrate, and catalyzes the conversion of lycopene to the C(45) intermediate dihydroisopentenyldehydrorhodopin (DH-IDR) and the conversion of isopentenyldehydrorhodopin (IDR) to the C(50) carotenoid dihydrobisanhydrobacterioruberin (DH-BABR) (By similarity). Can also catalyze the conversion of lycopene to tetrahydrobisanhydrobacterioruberin (TH-BABR) (By similarity).</text>
</comment>
<comment type="catalytic activity">
    <reaction evidence="2">
        <text>all-trans-lycopene + dimethylallyl diphosphate + H2O = dihydroisopentenyldehydrorhodopin + diphosphate</text>
        <dbReference type="Rhea" id="RHEA:58188"/>
        <dbReference type="ChEBI" id="CHEBI:15377"/>
        <dbReference type="ChEBI" id="CHEBI:15948"/>
        <dbReference type="ChEBI" id="CHEBI:33019"/>
        <dbReference type="ChEBI" id="CHEBI:57623"/>
        <dbReference type="ChEBI" id="CHEBI:87163"/>
        <dbReference type="EC" id="2.5.1.150"/>
    </reaction>
</comment>
<comment type="catalytic activity">
    <reaction evidence="1">
        <text>isopentenyldehydrorhodopin + dimethylallyl diphosphate + H2O = dihydrobisanhydrobacterioruberin + diphosphate</text>
        <dbReference type="Rhea" id="RHEA:58192"/>
        <dbReference type="ChEBI" id="CHEBI:15377"/>
        <dbReference type="ChEBI" id="CHEBI:33019"/>
        <dbReference type="ChEBI" id="CHEBI:57623"/>
        <dbReference type="ChEBI" id="CHEBI:87161"/>
        <dbReference type="ChEBI" id="CHEBI:87162"/>
        <dbReference type="EC" id="2.5.1.150"/>
    </reaction>
</comment>
<comment type="pathway">
    <text evidence="5">Carotenoid biosynthesis.</text>
</comment>
<comment type="subcellular location">
    <subcellularLocation>
        <location evidence="7">Cell membrane</location>
        <topology evidence="3">Multi-pass membrane protein</topology>
    </subcellularLocation>
</comment>
<comment type="miscellaneous">
    <text evidence="8">H.volcanii does not produce any known rhodopsins and unlike in H.salinarum, Lye is not regulated by bacterioopsin.</text>
</comment>
<comment type="similarity">
    <text evidence="7">Belongs to the UbiA prenyltransferase family.</text>
</comment>
<gene>
    <name evidence="6" type="primary">lye</name>
    <name type="ordered locus">HVO_2527</name>
    <name type="ORF">C498_07923</name>
</gene>
<feature type="chain" id="PRO_0000428795" description="Lycopene elongase/hydratase">
    <location>
        <begin position="1"/>
        <end position="301"/>
    </location>
</feature>
<feature type="transmembrane region" description="Helical" evidence="3">
    <location>
        <begin position="39"/>
        <end position="59"/>
    </location>
</feature>
<feature type="transmembrane region" description="Helical" evidence="3">
    <location>
        <begin position="61"/>
        <end position="81"/>
    </location>
</feature>
<feature type="transmembrane region" description="Helical" evidence="3">
    <location>
        <begin position="110"/>
        <end position="130"/>
    </location>
</feature>
<feature type="transmembrane region" description="Helical" evidence="3">
    <location>
        <begin position="133"/>
        <end position="153"/>
    </location>
</feature>
<feature type="transmembrane region" description="Helical" evidence="3">
    <location>
        <begin position="160"/>
        <end position="180"/>
    </location>
</feature>
<feature type="transmembrane region" description="Helical" evidence="3">
    <location>
        <begin position="186"/>
        <end position="206"/>
    </location>
</feature>
<feature type="transmembrane region" description="Helical" evidence="3">
    <location>
        <begin position="229"/>
        <end position="249"/>
    </location>
</feature>
<feature type="transmembrane region" description="Helical" evidence="3">
    <location>
        <begin position="252"/>
        <end position="272"/>
    </location>
</feature>
<feature type="transmembrane region" description="Helical" evidence="3">
    <location>
        <begin position="276"/>
        <end position="296"/>
    </location>
</feature>
<feature type="region of interest" description="Disordered" evidence="4">
    <location>
        <begin position="1"/>
        <end position="20"/>
    </location>
</feature>
<proteinExistence type="inferred from homology"/>
<keyword id="KW-0125">Carotenoid biosynthesis</keyword>
<keyword id="KW-1003">Cell membrane</keyword>
<keyword id="KW-0472">Membrane</keyword>
<keyword id="KW-1185">Reference proteome</keyword>
<keyword id="KW-0808">Transferase</keyword>
<keyword id="KW-0812">Transmembrane</keyword>
<keyword id="KW-1133">Transmembrane helix</keyword>
<sequence>MSADMAAQSESGEGGDDGRADGGLGDRLVYLAVLSRPRFWLYLAGPVVVGVAAAASALADLFGLEPVALFAYFLVPANVFLYGVNDVFDADVDEANPKKDDREARWRGDPVNTVVVAASGLLGVGLFAVAPRVAWPWLAAHFFLAVEYSAPPFRFKTTPLLDSVSNGLYVLPGVAAYAAVSGSNPPMLAVAGAWLWTMGMHTFSAIPDIEPDREAGIRTTATALGERRTYWYCAATWVLAAVAFAAVDLRLGALLAAYPVVVLGIVAAGVDVDRAYWWYPVINTVVGMLITLGALWRLVNG</sequence>
<dbReference type="EC" id="2.5.1.150" evidence="1"/>
<dbReference type="EMBL" id="CP001956">
    <property type="protein sequence ID" value="ADE02704.1"/>
    <property type="molecule type" value="Genomic_DNA"/>
</dbReference>
<dbReference type="EMBL" id="AOHU01000045">
    <property type="protein sequence ID" value="ELY32674.1"/>
    <property type="molecule type" value="Genomic_DNA"/>
</dbReference>
<dbReference type="RefSeq" id="WP_004042521.1">
    <property type="nucleotide sequence ID" value="NC_013967.1"/>
</dbReference>
<dbReference type="SMR" id="D4GTV9"/>
<dbReference type="STRING" id="309800.HVO_2527"/>
<dbReference type="PaxDb" id="309800-C498_07923"/>
<dbReference type="EnsemblBacteria" id="ADE02704">
    <property type="protein sequence ID" value="ADE02704"/>
    <property type="gene ID" value="HVO_2527"/>
</dbReference>
<dbReference type="GeneID" id="8926613"/>
<dbReference type="KEGG" id="hvo:HVO_2527"/>
<dbReference type="PATRIC" id="fig|309800.29.peg.1542"/>
<dbReference type="eggNOG" id="arCOG00478">
    <property type="taxonomic scope" value="Archaea"/>
</dbReference>
<dbReference type="HOGENOM" id="CLU_058976_0_0_2"/>
<dbReference type="OrthoDB" id="305381at2157"/>
<dbReference type="Proteomes" id="UP000008243">
    <property type="component" value="Chromosome"/>
</dbReference>
<dbReference type="Proteomes" id="UP000011532">
    <property type="component" value="Unassembled WGS sequence"/>
</dbReference>
<dbReference type="GO" id="GO:0005886">
    <property type="term" value="C:plasma membrane"/>
    <property type="evidence" value="ECO:0007669"/>
    <property type="project" value="UniProtKB-SubCell"/>
</dbReference>
<dbReference type="GO" id="GO:0016765">
    <property type="term" value="F:transferase activity, transferring alkyl or aryl (other than methyl) groups"/>
    <property type="evidence" value="ECO:0007669"/>
    <property type="project" value="InterPro"/>
</dbReference>
<dbReference type="GO" id="GO:0016117">
    <property type="term" value="P:carotenoid biosynthetic process"/>
    <property type="evidence" value="ECO:0007669"/>
    <property type="project" value="UniProtKB-KW"/>
</dbReference>
<dbReference type="CDD" id="cd13966">
    <property type="entry name" value="PT_UbiA_4"/>
    <property type="match status" value="1"/>
</dbReference>
<dbReference type="Gene3D" id="1.10.357.140">
    <property type="entry name" value="UbiA prenyltransferase"/>
    <property type="match status" value="1"/>
</dbReference>
<dbReference type="Gene3D" id="1.20.120.1780">
    <property type="entry name" value="UbiA prenyltransferase"/>
    <property type="match status" value="1"/>
</dbReference>
<dbReference type="InterPro" id="IPR050475">
    <property type="entry name" value="Prenyltransferase_related"/>
</dbReference>
<dbReference type="InterPro" id="IPR000537">
    <property type="entry name" value="UbiA_prenyltransferase"/>
</dbReference>
<dbReference type="InterPro" id="IPR044878">
    <property type="entry name" value="UbiA_sf"/>
</dbReference>
<dbReference type="NCBIfam" id="NF009516">
    <property type="entry name" value="PRK12875.1"/>
    <property type="match status" value="1"/>
</dbReference>
<dbReference type="PANTHER" id="PTHR42723">
    <property type="entry name" value="CHLOROPHYLL SYNTHASE"/>
    <property type="match status" value="1"/>
</dbReference>
<dbReference type="PANTHER" id="PTHR42723:SF1">
    <property type="entry name" value="CHLOROPHYLL SYNTHASE, CHLOROPLASTIC"/>
    <property type="match status" value="1"/>
</dbReference>
<dbReference type="Pfam" id="PF01040">
    <property type="entry name" value="UbiA"/>
    <property type="match status" value="1"/>
</dbReference>
<organism>
    <name type="scientific">Haloferax volcanii (strain ATCC 29605 / DSM 3757 / JCM 8879 / NBRC 14742 / NCIMB 2012 / VKM B-1768 / DS2)</name>
    <name type="common">Halobacterium volcanii</name>
    <dbReference type="NCBI Taxonomy" id="309800"/>
    <lineage>
        <taxon>Archaea</taxon>
        <taxon>Methanobacteriati</taxon>
        <taxon>Methanobacteriota</taxon>
        <taxon>Stenosarchaea group</taxon>
        <taxon>Halobacteria</taxon>
        <taxon>Halobacteriales</taxon>
        <taxon>Haloferacaceae</taxon>
        <taxon>Haloferax</taxon>
    </lineage>
</organism>
<reference key="1">
    <citation type="journal article" date="2010" name="PLoS ONE">
        <title>The complete genome sequence of Haloferax volcanii DS2, a model archaeon.</title>
        <authorList>
            <person name="Hartman A.L."/>
            <person name="Norais C."/>
            <person name="Badger J.H."/>
            <person name="Delmas S."/>
            <person name="Haldenby S."/>
            <person name="Madupu R."/>
            <person name="Robinson J."/>
            <person name="Khouri H."/>
            <person name="Ren Q."/>
            <person name="Lowe T.M."/>
            <person name="Maupin-Furlow J."/>
            <person name="Pohlschroder M."/>
            <person name="Daniels C."/>
            <person name="Pfeiffer F."/>
            <person name="Allers T."/>
            <person name="Eisen J.A."/>
        </authorList>
    </citation>
    <scope>NUCLEOTIDE SEQUENCE [LARGE SCALE GENOMIC DNA]</scope>
    <source>
        <strain>ATCC 29605 / DSM 3757 / JCM 8879 / NBRC 14742 / NCIMB 2012 / VKM B-1768 / DS2</strain>
    </source>
</reference>
<reference key="2">
    <citation type="journal article" date="2014" name="PLoS Genet.">
        <title>Phylogenetically driven sequencing of extremely halophilic archaea reveals strategies for static and dynamic osmo-response.</title>
        <authorList>
            <person name="Becker E.A."/>
            <person name="Seitzer P.M."/>
            <person name="Tritt A."/>
            <person name="Larsen D."/>
            <person name="Krusor M."/>
            <person name="Yao A.I."/>
            <person name="Wu D."/>
            <person name="Madern D."/>
            <person name="Eisen J.A."/>
            <person name="Darling A.E."/>
            <person name="Facciotti M.T."/>
        </authorList>
    </citation>
    <scope>NUCLEOTIDE SEQUENCE [LARGE SCALE GENOMIC DNA]</scope>
    <source>
        <strain>ATCC 29605 / DSM 3757 / JCM 8879 / NBRC 14742 / NCIMB 2012 / VKM B-1768 / DS2</strain>
    </source>
</reference>
<reference key="3">
    <citation type="journal article" date="2011" name="J. Bacteriol.">
        <title>Bacterioopsin-mediated regulation of bacterioruberin biosynthesis in Halobacterium salinarum.</title>
        <authorList>
            <person name="Dummer A.M."/>
            <person name="Bonsall J.C."/>
            <person name="Cihla J.B."/>
            <person name="Lawry S.M."/>
            <person name="Johnson G.C."/>
            <person name="Peck R.F."/>
        </authorList>
    </citation>
    <scope>FUNCTION</scope>
    <scope>PATHWAY</scope>
    <source>
        <strain>DS2 / DS70</strain>
    </source>
</reference>